<keyword id="KW-0002">3D-structure</keyword>
<keyword id="KW-0013">ADP-ribosylation</keyword>
<keyword id="KW-0021">Allosteric enzyme</keyword>
<keyword id="KW-0025">Alternative splicing</keyword>
<keyword id="KW-0090">Biological rhythms</keyword>
<keyword id="KW-0156">Chromatin regulator</keyword>
<keyword id="KW-0158">Chromosome</keyword>
<keyword id="KW-0223">Dioxygenase</keyword>
<keyword id="KW-0238">DNA-binding</keyword>
<keyword id="KW-0408">Iron</keyword>
<keyword id="KW-1017">Isopeptide bond</keyword>
<keyword id="KW-0433">Leucine-rich repeat</keyword>
<keyword id="KW-0479">Metal-binding</keyword>
<keyword id="KW-0539">Nucleus</keyword>
<keyword id="KW-0560">Oxidoreductase</keyword>
<keyword id="KW-0597">Phosphoprotein</keyword>
<keyword id="KW-1185">Reference proteome</keyword>
<keyword id="KW-0677">Repeat</keyword>
<keyword id="KW-0678">Repressor</keyword>
<keyword id="KW-0804">Transcription</keyword>
<keyword id="KW-0805">Transcription regulation</keyword>
<keyword id="KW-0832">Ubl conjugation</keyword>
<keyword id="KW-0833">Ubl conjugation pathway</keyword>
<keyword id="KW-0862">Zinc</keyword>
<keyword id="KW-0863">Zinc-finger</keyword>
<feature type="chain" id="PRO_0000119856" description="Lysine-specific demethylase 2A">
    <location>
        <begin position="1"/>
        <end position="1161"/>
    </location>
</feature>
<feature type="domain" description="JmjC" evidence="5">
    <location>
        <begin position="148"/>
        <end position="316"/>
    </location>
</feature>
<feature type="domain" description="F-box">
    <location>
        <begin position="888"/>
        <end position="935"/>
    </location>
</feature>
<feature type="repeat" description="LRR 1">
    <location>
        <begin position="960"/>
        <end position="981"/>
    </location>
</feature>
<feature type="repeat" description="LRR 2">
    <location>
        <begin position="983"/>
        <end position="1009"/>
    </location>
</feature>
<feature type="repeat" description="LRR 3">
    <location>
        <begin position="1047"/>
        <end position="1072"/>
    </location>
</feature>
<feature type="repeat" description="LRR 4">
    <location>
        <begin position="1073"/>
        <end position="1102"/>
    </location>
</feature>
<feature type="repeat" description="LRR 5">
    <location>
        <begin position="1103"/>
        <end position="1127"/>
    </location>
</feature>
<feature type="repeat" description="LRR 6">
    <location>
        <begin position="1128"/>
        <end position="1155"/>
    </location>
</feature>
<feature type="zinc finger region" description="CXXC-type" evidence="4">
    <location>
        <begin position="564"/>
        <end position="610"/>
    </location>
</feature>
<feature type="zinc finger region" description="PHD-type" evidence="3">
    <location>
        <begin position="617"/>
        <end position="678"/>
    </location>
</feature>
<feature type="region of interest" description="Disordered" evidence="6">
    <location>
        <begin position="419"/>
        <end position="445"/>
    </location>
</feature>
<feature type="region of interest" description="Disordered" evidence="6">
    <location>
        <begin position="532"/>
        <end position="557"/>
    </location>
</feature>
<feature type="region of interest" description="Disordered" evidence="6">
    <location>
        <begin position="705"/>
        <end position="789"/>
    </location>
</feature>
<feature type="region of interest" description="Disordered" evidence="6">
    <location>
        <begin position="840"/>
        <end position="886"/>
    </location>
</feature>
<feature type="compositionally biased region" description="Low complexity" evidence="6">
    <location>
        <begin position="419"/>
        <end position="433"/>
    </location>
</feature>
<feature type="compositionally biased region" description="Basic and acidic residues" evidence="6">
    <location>
        <begin position="746"/>
        <end position="757"/>
    </location>
</feature>
<feature type="compositionally biased region" description="Basic and acidic residues" evidence="6">
    <location>
        <begin position="771"/>
        <end position="789"/>
    </location>
</feature>
<feature type="compositionally biased region" description="Acidic residues" evidence="6">
    <location>
        <begin position="851"/>
        <end position="870"/>
    </location>
</feature>
<feature type="binding site" evidence="1">
    <location>
        <position position="209"/>
    </location>
    <ligand>
        <name>substrate</name>
    </ligand>
</feature>
<feature type="binding site" evidence="5">
    <location>
        <position position="212"/>
    </location>
    <ligand>
        <name>Fe cation</name>
        <dbReference type="ChEBI" id="CHEBI:24875"/>
        <note>catalytic</note>
    </ligand>
</feature>
<feature type="binding site" evidence="5">
    <location>
        <position position="214"/>
    </location>
    <ligand>
        <name>Fe cation</name>
        <dbReference type="ChEBI" id="CHEBI:24875"/>
        <note>catalytic</note>
    </ligand>
</feature>
<feature type="binding site" evidence="1">
    <location>
        <position position="229"/>
    </location>
    <ligand>
        <name>substrate</name>
    </ligand>
</feature>
<feature type="binding site" evidence="5">
    <location>
        <position position="284"/>
    </location>
    <ligand>
        <name>Fe cation</name>
        <dbReference type="ChEBI" id="CHEBI:24875"/>
        <note>catalytic</note>
    </ligand>
</feature>
<feature type="binding site" evidence="4">
    <location>
        <position position="571"/>
    </location>
    <ligand>
        <name>Zn(2+)</name>
        <dbReference type="ChEBI" id="CHEBI:29105"/>
        <label>1</label>
    </ligand>
</feature>
<feature type="binding site" evidence="4">
    <location>
        <position position="574"/>
    </location>
    <ligand>
        <name>Zn(2+)</name>
        <dbReference type="ChEBI" id="CHEBI:29105"/>
        <label>1</label>
    </ligand>
</feature>
<feature type="binding site" evidence="4">
    <location>
        <position position="577"/>
    </location>
    <ligand>
        <name>Zn(2+)</name>
        <dbReference type="ChEBI" id="CHEBI:29105"/>
        <label>1</label>
    </ligand>
</feature>
<feature type="binding site" evidence="4">
    <location>
        <position position="582"/>
    </location>
    <ligand>
        <name>Zn(2+)</name>
        <dbReference type="ChEBI" id="CHEBI:29105"/>
        <label>2</label>
    </ligand>
</feature>
<feature type="binding site" evidence="4">
    <location>
        <position position="585"/>
    </location>
    <ligand>
        <name>Zn(2+)</name>
        <dbReference type="ChEBI" id="CHEBI:29105"/>
        <label>2</label>
    </ligand>
</feature>
<feature type="binding site" evidence="4">
    <location>
        <position position="588"/>
    </location>
    <ligand>
        <name>Zn(2+)</name>
        <dbReference type="ChEBI" id="CHEBI:29105"/>
        <label>2</label>
    </ligand>
</feature>
<feature type="binding site" evidence="4">
    <location>
        <position position="604"/>
    </location>
    <ligand>
        <name>Zn(2+)</name>
        <dbReference type="ChEBI" id="CHEBI:29105"/>
        <label>2</label>
    </ligand>
</feature>
<feature type="binding site" evidence="4">
    <location>
        <position position="609"/>
    </location>
    <ligand>
        <name>Zn(2+)</name>
        <dbReference type="ChEBI" id="CHEBI:29105"/>
        <label>1</label>
    </ligand>
</feature>
<feature type="binding site" evidence="2">
    <location>
        <position position="620"/>
    </location>
    <ligand>
        <name>Zn(2+)</name>
        <dbReference type="ChEBI" id="CHEBI:29105"/>
    </ligand>
</feature>
<feature type="binding site" evidence="2">
    <location>
        <position position="623"/>
    </location>
    <ligand>
        <name>Zn(2+)</name>
        <dbReference type="ChEBI" id="CHEBI:29105"/>
    </ligand>
</feature>
<feature type="binding site" evidence="2">
    <location>
        <position position="642"/>
    </location>
    <ligand>
        <name>Zn(2+)</name>
        <dbReference type="ChEBI" id="CHEBI:29105"/>
    </ligand>
</feature>
<feature type="binding site" evidence="2">
    <location>
        <position position="645"/>
    </location>
    <ligand>
        <name>Zn(2+)</name>
        <dbReference type="ChEBI" id="CHEBI:29105"/>
    </ligand>
</feature>
<feature type="binding site" evidence="2">
    <location>
        <position position="650"/>
    </location>
    <ligand>
        <name>Zn(2+)</name>
        <dbReference type="ChEBI" id="CHEBI:29105"/>
    </ligand>
</feature>
<feature type="binding site" evidence="2">
    <location>
        <position position="653"/>
    </location>
    <ligand>
        <name>Zn(2+)</name>
        <dbReference type="ChEBI" id="CHEBI:29105"/>
    </ligand>
</feature>
<feature type="binding site" evidence="2">
    <location>
        <position position="672"/>
    </location>
    <ligand>
        <name>Zn(2+)</name>
        <dbReference type="ChEBI" id="CHEBI:29105"/>
    </ligand>
</feature>
<feature type="binding site" evidence="2">
    <location>
        <position position="675"/>
    </location>
    <ligand>
        <name>Zn(2+)</name>
        <dbReference type="ChEBI" id="CHEBI:29105"/>
    </ligand>
</feature>
<feature type="modified residue" description="Phosphoserine" evidence="12">
    <location>
        <position position="28"/>
    </location>
</feature>
<feature type="modified residue" description="Phosphoserine" evidence="2">
    <location>
        <position position="390"/>
    </location>
</feature>
<feature type="modified residue" description="Phosphoserine" evidence="2">
    <location>
        <position position="394"/>
    </location>
</feature>
<feature type="modified residue" description="Phosphoserine" evidence="12">
    <location>
        <position position="444"/>
    </location>
</feature>
<feature type="modified residue" description="Phosphothreonine" evidence="10">
    <location>
        <position position="550"/>
    </location>
</feature>
<feature type="modified residue" description="Phosphoserine" evidence="2">
    <location>
        <position position="558"/>
    </location>
</feature>
<feature type="modified residue" description="Phosphothreonine" evidence="11">
    <location>
        <position position="632"/>
    </location>
</feature>
<feature type="modified residue" description="Phosphoserine" evidence="12">
    <location>
        <position position="692"/>
    </location>
</feature>
<feature type="modified residue" description="Phosphothreonine" evidence="12">
    <location>
        <position position="713"/>
    </location>
</feature>
<feature type="modified residue" description="Phosphoserine" evidence="12">
    <location>
        <position position="718"/>
    </location>
</feature>
<feature type="modified residue" description="Phosphoserine" evidence="12">
    <location>
        <position position="731"/>
    </location>
</feature>
<feature type="modified residue" description="Phosphoserine" evidence="2">
    <location>
        <position position="825"/>
    </location>
</feature>
<feature type="modified residue" description="Phosphoserine" evidence="2">
    <location>
        <position position="868"/>
    </location>
</feature>
<feature type="modified residue" description="Phosphoserine" evidence="2">
    <location>
        <position position="882"/>
    </location>
</feature>
<feature type="modified residue" description="ADP-ribosylarginine" evidence="7">
    <location>
        <position position="1019"/>
    </location>
</feature>
<feature type="cross-link" description="Glycyl lysine isopeptide (Lys-Gly) (interchain with G-Cter in SUMO2)" evidence="2">
    <location>
        <position position="505"/>
    </location>
</feature>
<feature type="splice variant" id="VSP_017471" description="In isoform 3." evidence="8">
    <original>PNKFRYPFYYEMCWYVLE</original>
    <variation>SNVTIICVDVSPFKADVR</variation>
    <location>
        <begin position="321"/>
        <end position="338"/>
    </location>
</feature>
<feature type="splice variant" id="VSP_017472" description="In isoform 3." evidence="8">
    <location>
        <begin position="339"/>
        <end position="1161"/>
    </location>
</feature>
<feature type="splice variant" id="VSP_017473" description="In isoform 2." evidence="8">
    <original>I</original>
    <variation>S</variation>
    <location>
        <position position="494"/>
    </location>
</feature>
<feature type="splice variant" id="VSP_017474" description="In isoform 2." evidence="8">
    <location>
        <begin position="495"/>
        <end position="1161"/>
    </location>
</feature>
<feature type="sequence conflict" description="In Ref. 1; BAE20506 and 2; BC076576." evidence="9" ref="1 2">
    <original>W</original>
    <variation>R</variation>
    <location>
        <position position="159"/>
    </location>
</feature>
<feature type="sequence conflict" description="In Ref. 1; BAE20506 and 2; BC076576." evidence="9" ref="1 2">
    <original>I</original>
    <variation>M</variation>
    <location>
        <position position="202"/>
    </location>
</feature>
<feature type="sequence conflict" description="In Ref. 2; AAH57051." evidence="9" ref="2">
    <original>M</original>
    <variation>I</variation>
    <location>
        <position position="913"/>
    </location>
</feature>
<feature type="helix" evidence="13">
    <location>
        <begin position="40"/>
        <end position="45"/>
    </location>
</feature>
<feature type="helix" evidence="13">
    <location>
        <begin position="59"/>
        <end position="61"/>
    </location>
</feature>
<feature type="helix" evidence="13">
    <location>
        <begin position="64"/>
        <end position="70"/>
    </location>
</feature>
<feature type="strand" evidence="13">
    <location>
        <begin position="76"/>
        <end position="80"/>
    </location>
</feature>
<feature type="turn" evidence="14">
    <location>
        <begin position="82"/>
        <end position="84"/>
    </location>
</feature>
<feature type="helix" evidence="13">
    <location>
        <begin position="95"/>
        <end position="102"/>
    </location>
</feature>
<feature type="strand" evidence="13">
    <location>
        <begin position="107"/>
        <end position="112"/>
    </location>
</feature>
<feature type="turn" evidence="13">
    <location>
        <begin position="113"/>
        <end position="116"/>
    </location>
</feature>
<feature type="strand" evidence="13">
    <location>
        <begin position="117"/>
        <end position="122"/>
    </location>
</feature>
<feature type="helix" evidence="13">
    <location>
        <begin position="123"/>
        <end position="131"/>
    </location>
</feature>
<feature type="helix" evidence="13">
    <location>
        <begin position="134"/>
        <end position="136"/>
    </location>
</feature>
<feature type="strand" evidence="13">
    <location>
        <begin position="141"/>
        <end position="147"/>
    </location>
</feature>
<feature type="helix" evidence="13">
    <location>
        <begin position="154"/>
        <end position="156"/>
    </location>
</feature>
<feature type="helix" evidence="13">
    <location>
        <begin position="161"/>
        <end position="166"/>
    </location>
</feature>
<feature type="helix" evidence="13">
    <location>
        <begin position="168"/>
        <end position="172"/>
    </location>
</feature>
<feature type="helix" evidence="13">
    <location>
        <begin position="175"/>
        <end position="180"/>
    </location>
</feature>
<feature type="helix" evidence="13">
    <location>
        <begin position="188"/>
        <end position="190"/>
    </location>
</feature>
<feature type="strand" evidence="13">
    <location>
        <begin position="199"/>
        <end position="203"/>
    </location>
</feature>
<feature type="strand" evidence="13">
    <location>
        <begin position="208"/>
        <end position="212"/>
    </location>
</feature>
<feature type="helix" evidence="13">
    <location>
        <begin position="215"/>
        <end position="217"/>
    </location>
</feature>
<feature type="strand" evidence="13">
    <location>
        <begin position="219"/>
        <end position="227"/>
    </location>
</feature>
<feature type="strand" evidence="13">
    <location>
        <begin position="229"/>
        <end position="234"/>
    </location>
</feature>
<feature type="helix" evidence="13">
    <location>
        <begin position="238"/>
        <end position="250"/>
    </location>
</feature>
<feature type="turn" evidence="13">
    <location>
        <begin position="253"/>
        <end position="255"/>
    </location>
</feature>
<feature type="helix" evidence="13">
    <location>
        <begin position="258"/>
        <end position="260"/>
    </location>
</feature>
<feature type="strand" evidence="13">
    <location>
        <begin position="261"/>
        <end position="263"/>
    </location>
</feature>
<feature type="strand" evidence="13">
    <location>
        <begin position="266"/>
        <end position="270"/>
    </location>
</feature>
<feature type="strand" evidence="13">
    <location>
        <begin position="275"/>
        <end position="278"/>
    </location>
</feature>
<feature type="strand" evidence="13">
    <location>
        <begin position="283"/>
        <end position="287"/>
    </location>
</feature>
<feature type="strand" evidence="13">
    <location>
        <begin position="292"/>
        <end position="299"/>
    </location>
</feature>
<feature type="helix" evidence="13">
    <location>
        <begin position="305"/>
        <end position="317"/>
    </location>
</feature>
<feature type="helix" evidence="13">
    <location>
        <begin position="322"/>
        <end position="324"/>
    </location>
</feature>
<feature type="helix" evidence="13">
    <location>
        <begin position="329"/>
        <end position="345"/>
    </location>
</feature>
<feature type="helix" evidence="13">
    <location>
        <begin position="352"/>
        <end position="362"/>
    </location>
</feature>
<feature type="helix" evidence="13">
    <location>
        <begin position="455"/>
        <end position="469"/>
    </location>
</feature>
<feature type="helix" evidence="13">
    <location>
        <begin position="473"/>
        <end position="476"/>
    </location>
</feature>
<feature type="helix" evidence="13">
    <location>
        <begin position="485"/>
        <end position="499"/>
    </location>
</feature>
<feature type="turn" evidence="13">
    <location>
        <begin position="504"/>
        <end position="507"/>
    </location>
</feature>
<gene>
    <name type="primary">Kdm2a</name>
    <name evidence="2" type="synonym">Fbl11</name>
    <name type="synonym">Fbxl11</name>
    <name type="synonym">Jhdm1a</name>
    <name type="synonym">Kiaa1004</name>
</gene>
<accession>P59997</accession>
<accession>Q3U1M5</accession>
<accession>Q3UR56</accession>
<accession>Q3V3Q1</accession>
<accession>Q69ZT4</accession>
<organism>
    <name type="scientific">Mus musculus</name>
    <name type="common">Mouse</name>
    <dbReference type="NCBI Taxonomy" id="10090"/>
    <lineage>
        <taxon>Eukaryota</taxon>
        <taxon>Metazoa</taxon>
        <taxon>Chordata</taxon>
        <taxon>Craniata</taxon>
        <taxon>Vertebrata</taxon>
        <taxon>Euteleostomi</taxon>
        <taxon>Mammalia</taxon>
        <taxon>Eutheria</taxon>
        <taxon>Euarchontoglires</taxon>
        <taxon>Glires</taxon>
        <taxon>Rodentia</taxon>
        <taxon>Myomorpha</taxon>
        <taxon>Muroidea</taxon>
        <taxon>Muridae</taxon>
        <taxon>Murinae</taxon>
        <taxon>Mus</taxon>
        <taxon>Mus</taxon>
    </lineage>
</organism>
<reference key="1">
    <citation type="journal article" date="2005" name="Science">
        <title>The transcriptional landscape of the mammalian genome.</title>
        <authorList>
            <person name="Carninci P."/>
            <person name="Kasukawa T."/>
            <person name="Katayama S."/>
            <person name="Gough J."/>
            <person name="Frith M.C."/>
            <person name="Maeda N."/>
            <person name="Oyama R."/>
            <person name="Ravasi T."/>
            <person name="Lenhard B."/>
            <person name="Wells C."/>
            <person name="Kodzius R."/>
            <person name="Shimokawa K."/>
            <person name="Bajic V.B."/>
            <person name="Brenner S.E."/>
            <person name="Batalov S."/>
            <person name="Forrest A.R."/>
            <person name="Zavolan M."/>
            <person name="Davis M.J."/>
            <person name="Wilming L.G."/>
            <person name="Aidinis V."/>
            <person name="Allen J.E."/>
            <person name="Ambesi-Impiombato A."/>
            <person name="Apweiler R."/>
            <person name="Aturaliya R.N."/>
            <person name="Bailey T.L."/>
            <person name="Bansal M."/>
            <person name="Baxter L."/>
            <person name="Beisel K.W."/>
            <person name="Bersano T."/>
            <person name="Bono H."/>
            <person name="Chalk A.M."/>
            <person name="Chiu K.P."/>
            <person name="Choudhary V."/>
            <person name="Christoffels A."/>
            <person name="Clutterbuck D.R."/>
            <person name="Crowe M.L."/>
            <person name="Dalla E."/>
            <person name="Dalrymple B.P."/>
            <person name="de Bono B."/>
            <person name="Della Gatta G."/>
            <person name="di Bernardo D."/>
            <person name="Down T."/>
            <person name="Engstrom P."/>
            <person name="Fagiolini M."/>
            <person name="Faulkner G."/>
            <person name="Fletcher C.F."/>
            <person name="Fukushima T."/>
            <person name="Furuno M."/>
            <person name="Futaki S."/>
            <person name="Gariboldi M."/>
            <person name="Georgii-Hemming P."/>
            <person name="Gingeras T.R."/>
            <person name="Gojobori T."/>
            <person name="Green R.E."/>
            <person name="Gustincich S."/>
            <person name="Harbers M."/>
            <person name="Hayashi Y."/>
            <person name="Hensch T.K."/>
            <person name="Hirokawa N."/>
            <person name="Hill D."/>
            <person name="Huminiecki L."/>
            <person name="Iacono M."/>
            <person name="Ikeo K."/>
            <person name="Iwama A."/>
            <person name="Ishikawa T."/>
            <person name="Jakt M."/>
            <person name="Kanapin A."/>
            <person name="Katoh M."/>
            <person name="Kawasawa Y."/>
            <person name="Kelso J."/>
            <person name="Kitamura H."/>
            <person name="Kitano H."/>
            <person name="Kollias G."/>
            <person name="Krishnan S.P."/>
            <person name="Kruger A."/>
            <person name="Kummerfeld S.K."/>
            <person name="Kurochkin I.V."/>
            <person name="Lareau L.F."/>
            <person name="Lazarevic D."/>
            <person name="Lipovich L."/>
            <person name="Liu J."/>
            <person name="Liuni S."/>
            <person name="McWilliam S."/>
            <person name="Madan Babu M."/>
            <person name="Madera M."/>
            <person name="Marchionni L."/>
            <person name="Matsuda H."/>
            <person name="Matsuzawa S."/>
            <person name="Miki H."/>
            <person name="Mignone F."/>
            <person name="Miyake S."/>
            <person name="Morris K."/>
            <person name="Mottagui-Tabar S."/>
            <person name="Mulder N."/>
            <person name="Nakano N."/>
            <person name="Nakauchi H."/>
            <person name="Ng P."/>
            <person name="Nilsson R."/>
            <person name="Nishiguchi S."/>
            <person name="Nishikawa S."/>
            <person name="Nori F."/>
            <person name="Ohara O."/>
            <person name="Okazaki Y."/>
            <person name="Orlando V."/>
            <person name="Pang K.C."/>
            <person name="Pavan W.J."/>
            <person name="Pavesi G."/>
            <person name="Pesole G."/>
            <person name="Petrovsky N."/>
            <person name="Piazza S."/>
            <person name="Reed J."/>
            <person name="Reid J.F."/>
            <person name="Ring B.Z."/>
            <person name="Ringwald M."/>
            <person name="Rost B."/>
            <person name="Ruan Y."/>
            <person name="Salzberg S.L."/>
            <person name="Sandelin A."/>
            <person name="Schneider C."/>
            <person name="Schoenbach C."/>
            <person name="Sekiguchi K."/>
            <person name="Semple C.A."/>
            <person name="Seno S."/>
            <person name="Sessa L."/>
            <person name="Sheng Y."/>
            <person name="Shibata Y."/>
            <person name="Shimada H."/>
            <person name="Shimada K."/>
            <person name="Silva D."/>
            <person name="Sinclair B."/>
            <person name="Sperling S."/>
            <person name="Stupka E."/>
            <person name="Sugiura K."/>
            <person name="Sultana R."/>
            <person name="Takenaka Y."/>
            <person name="Taki K."/>
            <person name="Tammoja K."/>
            <person name="Tan S.L."/>
            <person name="Tang S."/>
            <person name="Taylor M.S."/>
            <person name="Tegner J."/>
            <person name="Teichmann S.A."/>
            <person name="Ueda H.R."/>
            <person name="van Nimwegen E."/>
            <person name="Verardo R."/>
            <person name="Wei C.L."/>
            <person name="Yagi K."/>
            <person name="Yamanishi H."/>
            <person name="Zabarovsky E."/>
            <person name="Zhu S."/>
            <person name="Zimmer A."/>
            <person name="Hide W."/>
            <person name="Bult C."/>
            <person name="Grimmond S.M."/>
            <person name="Teasdale R.D."/>
            <person name="Liu E.T."/>
            <person name="Brusic V."/>
            <person name="Quackenbush J."/>
            <person name="Wahlestedt C."/>
            <person name="Mattick J.S."/>
            <person name="Hume D.A."/>
            <person name="Kai C."/>
            <person name="Sasaki D."/>
            <person name="Tomaru Y."/>
            <person name="Fukuda S."/>
            <person name="Kanamori-Katayama M."/>
            <person name="Suzuki M."/>
            <person name="Aoki J."/>
            <person name="Arakawa T."/>
            <person name="Iida J."/>
            <person name="Imamura K."/>
            <person name="Itoh M."/>
            <person name="Kato T."/>
            <person name="Kawaji H."/>
            <person name="Kawagashira N."/>
            <person name="Kawashima T."/>
            <person name="Kojima M."/>
            <person name="Kondo S."/>
            <person name="Konno H."/>
            <person name="Nakano K."/>
            <person name="Ninomiya N."/>
            <person name="Nishio T."/>
            <person name="Okada M."/>
            <person name="Plessy C."/>
            <person name="Shibata K."/>
            <person name="Shiraki T."/>
            <person name="Suzuki S."/>
            <person name="Tagami M."/>
            <person name="Waki K."/>
            <person name="Watahiki A."/>
            <person name="Okamura-Oho Y."/>
            <person name="Suzuki H."/>
            <person name="Kawai J."/>
            <person name="Hayashizaki Y."/>
        </authorList>
    </citation>
    <scope>NUCLEOTIDE SEQUENCE [LARGE SCALE MRNA] (ISOFORMS 2 AND 3)</scope>
    <scope>NUCLEOTIDE SEQUENCE [LARGE SCALE MRNA] OF 646-1161</scope>
    <source>
        <strain>C57BL/6J</strain>
        <tissue>Skin</tissue>
    </source>
</reference>
<reference key="2">
    <citation type="journal article" date="2004" name="Genome Res.">
        <title>The status, quality, and expansion of the NIH full-length cDNA project: the Mammalian Gene Collection (MGC).</title>
        <authorList>
            <consortium name="The MGC Project Team"/>
        </authorList>
    </citation>
    <scope>NUCLEOTIDE SEQUENCE [LARGE SCALE MRNA] (ISOFORM 1)</scope>
    <source>
        <strain>C57BL/6J</strain>
        <tissue>Brain</tissue>
    </source>
</reference>
<reference key="3">
    <citation type="journal article" date="2004" name="DNA Res.">
        <title>Prediction of the coding sequences of mouse homologues of KIAA gene: IV. The complete nucleotide sequences of 500 mouse KIAA-homologous cDNAs identified by screening of terminal sequences of cDNA clones randomly sampled from size-fractionated libraries.</title>
        <authorList>
            <person name="Okazaki N."/>
            <person name="Kikuno R."/>
            <person name="Ohara R."/>
            <person name="Inamoto S."/>
            <person name="Koseki H."/>
            <person name="Hiraoka S."/>
            <person name="Saga Y."/>
            <person name="Seino S."/>
            <person name="Nishimura M."/>
            <person name="Kaisho T."/>
            <person name="Hoshino K."/>
            <person name="Kitamura H."/>
            <person name="Nagase T."/>
            <person name="Ohara O."/>
            <person name="Koga H."/>
        </authorList>
    </citation>
    <scope>NUCLEOTIDE SEQUENCE [LARGE SCALE MRNA] OF 453-1161</scope>
    <source>
        <tissue>Thymus</tissue>
    </source>
</reference>
<reference key="4">
    <citation type="journal article" date="2007" name="Proc. Natl. Acad. Sci. U.S.A.">
        <title>Large-scale phosphorylation analysis of mouse liver.</title>
        <authorList>
            <person name="Villen J."/>
            <person name="Beausoleil S.A."/>
            <person name="Gerber S.A."/>
            <person name="Gygi S.P."/>
        </authorList>
    </citation>
    <scope>PHOSPHORYLATION [LARGE SCALE ANALYSIS] AT THR-550</scope>
    <scope>IDENTIFICATION BY MASS SPECTROMETRY [LARGE SCALE ANALYSIS]</scope>
    <source>
        <tissue>Liver</tissue>
    </source>
</reference>
<reference key="5">
    <citation type="journal article" date="2007" name="Science">
        <title>ATM and ATR substrate analysis reveals extensive protein networks responsive to DNA damage.</title>
        <authorList>
            <person name="Matsuoka S."/>
            <person name="Ballif B.A."/>
            <person name="Smogorzewska A."/>
            <person name="McDonald E.R. III"/>
            <person name="Hurov K.E."/>
            <person name="Luo J."/>
            <person name="Bakalarski C.E."/>
            <person name="Zhao Z."/>
            <person name="Solimini N."/>
            <person name="Lerenthal Y."/>
            <person name="Shiloh Y."/>
            <person name="Gygi S.P."/>
            <person name="Elledge S.J."/>
        </authorList>
    </citation>
    <scope>PHOSPHORYLATION [LARGE SCALE ANALYSIS] AT THR-632</scope>
    <scope>IDENTIFICATION BY MASS SPECTROMETRY [LARGE SCALE ANALYSIS]</scope>
    <source>
        <tissue>Embryonic fibroblast</tissue>
    </source>
</reference>
<reference key="6">
    <citation type="journal article" date="2010" name="Cell">
        <title>A tissue-specific atlas of mouse protein phosphorylation and expression.</title>
        <authorList>
            <person name="Huttlin E.L."/>
            <person name="Jedrychowski M.P."/>
            <person name="Elias J.E."/>
            <person name="Goswami T."/>
            <person name="Rad R."/>
            <person name="Beausoleil S.A."/>
            <person name="Villen J."/>
            <person name="Haas W."/>
            <person name="Sowa M.E."/>
            <person name="Gygi S.P."/>
        </authorList>
    </citation>
    <scope>PHOSPHORYLATION [LARGE SCALE ANALYSIS] AT SER-28; SER-444; SER-692; THR-713; SER-718 AND SER-731</scope>
    <scope>IDENTIFICATION BY MASS SPECTROMETRY [LARGE SCALE ANALYSIS]</scope>
    <source>
        <tissue>Brain</tissue>
        <tissue>Kidney</tissue>
        <tissue>Lung</tissue>
        <tissue>Spleen</tissue>
        <tissue>Testis</tissue>
    </source>
</reference>
<reference key="7">
    <citation type="journal article" date="2020" name="Aging (Albany NY)">
        <title>SIRT6 mono-ADP ribosylates KDM2A to locally increase H3K36me2 at DNA damage sites to inhibit transcription and promote repair.</title>
        <authorList>
            <person name="Rezazadeh S."/>
            <person name="Yang D."/>
            <person name="Biashad S.A."/>
            <person name="Firsanov D."/>
            <person name="Takasugi M."/>
            <person name="Gilbert M."/>
            <person name="Tombline G."/>
            <person name="Bhanu N.V."/>
            <person name="Garcia B.A."/>
            <person name="Seluanov A."/>
            <person name="Gorbunova V."/>
        </authorList>
    </citation>
    <scope>FUNCTION</scope>
    <scope>SUBCELLULAR LOCATION</scope>
    <scope>ADP-RIBOSYLATION AT ARG-1019</scope>
</reference>
<sequence length="1161" mass="132680">MEPEEERIRYSQRLRGTMRRRYEDDGISDDEIEGKRTFDLEEKLQTNKYNANFVTFMEGKDFNVEYIQRGGLRDPLIFKNSDGLGIKMPDPDFTVNDVKMCVGSRRMVDVMDVNTQKGIEMTMAQWTRYYETPEEEREKLYNVISLEFSHTRLENMVQWPSTVDFIDWVDNMWPRHLKESQTESTNAILEMQYPKVQKYCLISVRGCYTDFHVDFGGTSVWYHIHQGGKVFWLIPPTAHNLELYENWLLSGKQGDIFLGDRVSDCQRIELKQGYTFVIPSGWIHAVYTPTDTLVFGGNFLHSFNIPMQLKIYSIEDRTRVPNKFRYPFYYEMCWYVLERYVYCITNRSHLTKDFQKESLSMDMELNELESGNGDEEGVDREARRMNNKRSVLTSPVANGVNLDYDGLGKACRSLPSLKKTLSGDSSSDSTRGSHNGQVWDPQCSPKKDRQVHLTHFELEGLRCLVDKLESLPLHKKCVPTGIEDEDALIADVKILLEELASSDPKLALTGVPIVQWPKRDKLKFPTRPKVRVPTIPITKPHTMKPAPRLTPVRPAAASPIVSGARRRRVRCRKCKACVQGECGVCHYCRDMKKFGGPGRMKQSCVLRQCLAPRLPHSVTCSLCGEVDQNEETQDFEKKLMECCICNEIVHPGCLQMDGEGLLNEELPNCWECPKCYQEDSSDKAQKRKIEESDEEAVQAKVLRPLRSCEEPLTPPPHSPTSMLQLIHDPVSPRGMVTRSSPGAGPSDHHSASRDERFKRRQLLRLQATERTMVREKENNPSGKKELSEVEKAKIRGSYLTVTLQRPTKELHGTSIVPKLQAITASSANLRPNPRVLMQHCPARNPQHGDEEGLGGEEEEEEEEEEDDSAEEGGAARLNGRGSWAQDGDESWMQREVWMSVFRYLSRKELCECMRVCKTWYKWCCDKRLWTKIDLSRCKAIVPQALSGIIKRQPVSLDLSWTNISKKQLTWLVNRLPGLKDLLLAGCSWSAVSALSTSSCPLLRTLDLRWAVGIKDPQIRDLLTPPTDKPGQDNRSKLRNMTDFRLAGLDITDATLRLIIRHMPLLSRLDLSHCSHLTDQSSNLLTAVGSSTRYSLTELNMAGCNKLTDQTLFFLRRIANVTLIDLRGCKQITRKACEHFISDLSINSLYCLSDEKLIQKIS</sequence>
<dbReference type="EC" id="1.14.11.27" evidence="2"/>
<dbReference type="EMBL" id="AK037157">
    <property type="protein sequence ID" value="BAE20506.1"/>
    <property type="molecule type" value="mRNA"/>
</dbReference>
<dbReference type="EMBL" id="AK141779">
    <property type="protein sequence ID" value="BAE24832.1"/>
    <property type="molecule type" value="mRNA"/>
</dbReference>
<dbReference type="EMBL" id="AK155866">
    <property type="protein sequence ID" value="BAE33470.1"/>
    <property type="molecule type" value="mRNA"/>
</dbReference>
<dbReference type="EMBL" id="BC057051">
    <property type="protein sequence ID" value="AAH57051.1"/>
    <property type="molecule type" value="mRNA"/>
</dbReference>
<dbReference type="EMBL" id="BC076576">
    <property type="status" value="NOT_ANNOTATED_CDS"/>
    <property type="molecule type" value="mRNA"/>
</dbReference>
<dbReference type="EMBL" id="AK173084">
    <property type="protein sequence ID" value="BAD32362.1"/>
    <property type="molecule type" value="mRNA"/>
</dbReference>
<dbReference type="CCDS" id="CCDS37886.1">
    <molecule id="P59997-1"/>
</dbReference>
<dbReference type="RefSeq" id="NP_001001984.2">
    <property type="nucleotide sequence ID" value="NM_001001984.2"/>
</dbReference>
<dbReference type="PDB" id="4QWN">
    <property type="method" value="X-ray"/>
    <property type="resolution" value="2.10 A"/>
    <property type="chains" value="A/C=36-364, B/D=450-517"/>
</dbReference>
<dbReference type="PDB" id="4QX7">
    <property type="method" value="X-ray"/>
    <property type="resolution" value="2.34 A"/>
    <property type="chains" value="A/C=36-364, B/D=450-517"/>
</dbReference>
<dbReference type="PDB" id="4QX8">
    <property type="method" value="X-ray"/>
    <property type="resolution" value="1.65 A"/>
    <property type="chains" value="A/C=36-364, B/D=450-517"/>
</dbReference>
<dbReference type="PDB" id="4QXB">
    <property type="method" value="X-ray"/>
    <property type="resolution" value="1.60 A"/>
    <property type="chains" value="A/C=36-364, B/D=450-517"/>
</dbReference>
<dbReference type="PDB" id="4QXC">
    <property type="method" value="X-ray"/>
    <property type="resolution" value="1.75 A"/>
    <property type="chains" value="A/C=36-364, B/D=450-517"/>
</dbReference>
<dbReference type="PDB" id="4QXH">
    <property type="method" value="X-ray"/>
    <property type="resolution" value="2.20 A"/>
    <property type="chains" value="A/C=36-364, B/D=450-517"/>
</dbReference>
<dbReference type="PDB" id="4TN7">
    <property type="method" value="X-ray"/>
    <property type="resolution" value="2.20 A"/>
    <property type="chains" value="A/C=36-364, B/D=450-517"/>
</dbReference>
<dbReference type="PDB" id="7UVA">
    <property type="method" value="X-ray"/>
    <property type="resolution" value="1.98 A"/>
    <property type="chains" value="A/D=36-364, B/E=450-517"/>
</dbReference>
<dbReference type="PDBsum" id="4QWN"/>
<dbReference type="PDBsum" id="4QX7"/>
<dbReference type="PDBsum" id="4QX8"/>
<dbReference type="PDBsum" id="4QXB"/>
<dbReference type="PDBsum" id="4QXC"/>
<dbReference type="PDBsum" id="4QXH"/>
<dbReference type="PDBsum" id="4TN7"/>
<dbReference type="PDBsum" id="7UVA"/>
<dbReference type="SMR" id="P59997"/>
<dbReference type="BioGRID" id="230438">
    <property type="interactions" value="3"/>
</dbReference>
<dbReference type="DIP" id="DIP-46352N"/>
<dbReference type="FunCoup" id="P59997">
    <property type="interactions" value="3521"/>
</dbReference>
<dbReference type="IntAct" id="P59997">
    <property type="interactions" value="1"/>
</dbReference>
<dbReference type="STRING" id="10090.ENSMUSP00000047683"/>
<dbReference type="GlyGen" id="P59997">
    <property type="glycosylation" value="2 sites, 1 O-linked glycan (1 site)"/>
</dbReference>
<dbReference type="iPTMnet" id="P59997"/>
<dbReference type="PhosphoSitePlus" id="P59997"/>
<dbReference type="jPOST" id="P59997"/>
<dbReference type="PaxDb" id="10090-ENSMUSP00000047683"/>
<dbReference type="PeptideAtlas" id="P59997"/>
<dbReference type="ProteomicsDB" id="269285">
    <molecule id="P59997-1"/>
</dbReference>
<dbReference type="ProteomicsDB" id="269286">
    <molecule id="P59997-2"/>
</dbReference>
<dbReference type="ProteomicsDB" id="269287">
    <molecule id="P59997-3"/>
</dbReference>
<dbReference type="Pumba" id="P59997"/>
<dbReference type="DNASU" id="225876"/>
<dbReference type="GeneID" id="225876"/>
<dbReference type="KEGG" id="mmu:225876"/>
<dbReference type="AGR" id="MGI:1354736"/>
<dbReference type="CTD" id="22992"/>
<dbReference type="MGI" id="MGI:1354736">
    <property type="gene designation" value="Kdm2a"/>
</dbReference>
<dbReference type="eggNOG" id="KOG1633">
    <property type="taxonomic scope" value="Eukaryota"/>
</dbReference>
<dbReference type="eggNOG" id="KOG1947">
    <property type="taxonomic scope" value="Eukaryota"/>
</dbReference>
<dbReference type="InParanoid" id="P59997"/>
<dbReference type="OrthoDB" id="5876800at2759"/>
<dbReference type="PhylomeDB" id="P59997"/>
<dbReference type="Reactome" id="R-MMU-3214842">
    <property type="pathway name" value="HDMs demethylate histones"/>
</dbReference>
<dbReference type="BioGRID-ORCS" id="225876">
    <property type="hits" value="9 hits in 121 CRISPR screens"/>
</dbReference>
<dbReference type="ChiTaRS" id="Kdm2a">
    <property type="organism name" value="mouse"/>
</dbReference>
<dbReference type="EvolutionaryTrace" id="P59997"/>
<dbReference type="PRO" id="PR:P59997"/>
<dbReference type="Proteomes" id="UP000000589">
    <property type="component" value="Unplaced"/>
</dbReference>
<dbReference type="RNAct" id="P59997">
    <property type="molecule type" value="protein"/>
</dbReference>
<dbReference type="GO" id="GO:0000785">
    <property type="term" value="C:chromatin"/>
    <property type="evidence" value="ECO:0000314"/>
    <property type="project" value="UniProtKB"/>
</dbReference>
<dbReference type="GO" id="GO:0005654">
    <property type="term" value="C:nucleoplasm"/>
    <property type="evidence" value="ECO:0007669"/>
    <property type="project" value="UniProtKB-SubCell"/>
</dbReference>
<dbReference type="GO" id="GO:0051864">
    <property type="term" value="F:histone H3K36 demethylase activity"/>
    <property type="evidence" value="ECO:0000266"/>
    <property type="project" value="MGI"/>
</dbReference>
<dbReference type="GO" id="GO:0140680">
    <property type="term" value="F:histone H3K36me/H3K36me2 demethylase activity"/>
    <property type="evidence" value="ECO:0007669"/>
    <property type="project" value="UniProtKB-EC"/>
</dbReference>
<dbReference type="GO" id="GO:0045322">
    <property type="term" value="F:unmethylated CpG binding"/>
    <property type="evidence" value="ECO:0000314"/>
    <property type="project" value="MGI"/>
</dbReference>
<dbReference type="GO" id="GO:0008270">
    <property type="term" value="F:zinc ion binding"/>
    <property type="evidence" value="ECO:0000250"/>
    <property type="project" value="UniProtKB"/>
</dbReference>
<dbReference type="GO" id="GO:0032922">
    <property type="term" value="P:circadian regulation of gene expression"/>
    <property type="evidence" value="ECO:0000250"/>
    <property type="project" value="UniProtKB"/>
</dbReference>
<dbReference type="GO" id="GO:0001947">
    <property type="term" value="P:heart looping"/>
    <property type="evidence" value="ECO:0000315"/>
    <property type="project" value="MGI"/>
</dbReference>
<dbReference type="GO" id="GO:0001701">
    <property type="term" value="P:in utero embryonic development"/>
    <property type="evidence" value="ECO:0000315"/>
    <property type="project" value="MGI"/>
</dbReference>
<dbReference type="GO" id="GO:0035264">
    <property type="term" value="P:multicellular organism growth"/>
    <property type="evidence" value="ECO:0000315"/>
    <property type="project" value="MGI"/>
</dbReference>
<dbReference type="GO" id="GO:0043066">
    <property type="term" value="P:negative regulation of apoptotic process"/>
    <property type="evidence" value="ECO:0000315"/>
    <property type="project" value="MGI"/>
</dbReference>
<dbReference type="GO" id="GO:0010629">
    <property type="term" value="P:negative regulation of gene expression"/>
    <property type="evidence" value="ECO:0000315"/>
    <property type="project" value="MGI"/>
</dbReference>
<dbReference type="GO" id="GO:0010944">
    <property type="term" value="P:negative regulation of transcription by competitive promoter binding"/>
    <property type="evidence" value="ECO:0000250"/>
    <property type="project" value="UniProtKB"/>
</dbReference>
<dbReference type="GO" id="GO:0001843">
    <property type="term" value="P:neural tube closure"/>
    <property type="evidence" value="ECO:0000315"/>
    <property type="project" value="MGI"/>
</dbReference>
<dbReference type="GO" id="GO:0060563">
    <property type="term" value="P:neuroepithelial cell differentiation"/>
    <property type="evidence" value="ECO:0000315"/>
    <property type="project" value="MGI"/>
</dbReference>
<dbReference type="GO" id="GO:0030182">
    <property type="term" value="P:neuron differentiation"/>
    <property type="evidence" value="ECO:0000315"/>
    <property type="project" value="MGI"/>
</dbReference>
<dbReference type="GO" id="GO:0010628">
    <property type="term" value="P:positive regulation of gene expression"/>
    <property type="evidence" value="ECO:0000315"/>
    <property type="project" value="MGI"/>
</dbReference>
<dbReference type="GO" id="GO:0042752">
    <property type="term" value="P:regulation of circadian rhythm"/>
    <property type="evidence" value="ECO:0000250"/>
    <property type="project" value="UniProtKB"/>
</dbReference>
<dbReference type="GO" id="GO:0045815">
    <property type="term" value="P:transcription initiation-coupled chromatin remodeling"/>
    <property type="evidence" value="ECO:0000315"/>
    <property type="project" value="UniProtKB"/>
</dbReference>
<dbReference type="CDD" id="cd21784">
    <property type="entry name" value="CTD_KDM2A"/>
    <property type="match status" value="1"/>
</dbReference>
<dbReference type="CDD" id="cd22181">
    <property type="entry name" value="F-box_FBXL11"/>
    <property type="match status" value="1"/>
</dbReference>
<dbReference type="CDD" id="cd15643">
    <property type="entry name" value="PHD_KDM2A"/>
    <property type="match status" value="1"/>
</dbReference>
<dbReference type="FunFam" id="2.60.120.650:FF:000005">
    <property type="entry name" value="lysine-specific demethylase 2A isoform X1"/>
    <property type="match status" value="1"/>
</dbReference>
<dbReference type="FunFam" id="3.80.10.10:FF:000011">
    <property type="entry name" value="Lysine-specific demethylase 2B isoform X1"/>
    <property type="match status" value="1"/>
</dbReference>
<dbReference type="Gene3D" id="1.20.58.1360">
    <property type="match status" value="1"/>
</dbReference>
<dbReference type="Gene3D" id="6.10.280.250">
    <property type="match status" value="1"/>
</dbReference>
<dbReference type="Gene3D" id="2.60.120.650">
    <property type="entry name" value="Cupin"/>
    <property type="match status" value="1"/>
</dbReference>
<dbReference type="Gene3D" id="3.80.10.10">
    <property type="entry name" value="Ribonuclease Inhibitor"/>
    <property type="match status" value="1"/>
</dbReference>
<dbReference type="Gene3D" id="3.30.40.10">
    <property type="entry name" value="Zinc/RING finger domain, C3HC4 (zinc finger)"/>
    <property type="match status" value="1"/>
</dbReference>
<dbReference type="InterPro" id="IPR001810">
    <property type="entry name" value="F-box_dom"/>
</dbReference>
<dbReference type="InterPro" id="IPR041070">
    <property type="entry name" value="JHD"/>
</dbReference>
<dbReference type="InterPro" id="IPR050690">
    <property type="entry name" value="JHDM1_Histone_Demethylase"/>
</dbReference>
<dbReference type="InterPro" id="IPR003347">
    <property type="entry name" value="JmjC_dom"/>
</dbReference>
<dbReference type="InterPro" id="IPR006553">
    <property type="entry name" value="Leu-rich_rpt_Cys-con_subtyp"/>
</dbReference>
<dbReference type="InterPro" id="IPR032675">
    <property type="entry name" value="LRR_dom_sf"/>
</dbReference>
<dbReference type="InterPro" id="IPR019786">
    <property type="entry name" value="Zinc_finger_PHD-type_CS"/>
</dbReference>
<dbReference type="InterPro" id="IPR002857">
    <property type="entry name" value="Znf_CXXC"/>
</dbReference>
<dbReference type="InterPro" id="IPR011011">
    <property type="entry name" value="Znf_FYVE_PHD"/>
</dbReference>
<dbReference type="InterPro" id="IPR001965">
    <property type="entry name" value="Znf_PHD"/>
</dbReference>
<dbReference type="InterPro" id="IPR019787">
    <property type="entry name" value="Znf_PHD-finger"/>
</dbReference>
<dbReference type="InterPro" id="IPR013083">
    <property type="entry name" value="Znf_RING/FYVE/PHD"/>
</dbReference>
<dbReference type="PANTHER" id="PTHR23123">
    <property type="entry name" value="PHD/F-BOX CONTAINING PROTEIN"/>
    <property type="match status" value="1"/>
</dbReference>
<dbReference type="Pfam" id="PF12937">
    <property type="entry name" value="F-box-like"/>
    <property type="match status" value="1"/>
</dbReference>
<dbReference type="Pfam" id="PF17811">
    <property type="entry name" value="JHD"/>
    <property type="match status" value="1"/>
</dbReference>
<dbReference type="Pfam" id="PF16866">
    <property type="entry name" value="PHD_4"/>
    <property type="match status" value="1"/>
</dbReference>
<dbReference type="Pfam" id="PF02008">
    <property type="entry name" value="zf-CXXC"/>
    <property type="match status" value="1"/>
</dbReference>
<dbReference type="SMART" id="SM00558">
    <property type="entry name" value="JmjC"/>
    <property type="match status" value="1"/>
</dbReference>
<dbReference type="SMART" id="SM00367">
    <property type="entry name" value="LRR_CC"/>
    <property type="match status" value="3"/>
</dbReference>
<dbReference type="SMART" id="SM00249">
    <property type="entry name" value="PHD"/>
    <property type="match status" value="1"/>
</dbReference>
<dbReference type="SUPFAM" id="SSF51197">
    <property type="entry name" value="Clavaminate synthase-like"/>
    <property type="match status" value="1"/>
</dbReference>
<dbReference type="SUPFAM" id="SSF57903">
    <property type="entry name" value="FYVE/PHD zinc finger"/>
    <property type="match status" value="1"/>
</dbReference>
<dbReference type="SUPFAM" id="SSF52047">
    <property type="entry name" value="RNI-like"/>
    <property type="match status" value="1"/>
</dbReference>
<dbReference type="PROSITE" id="PS51184">
    <property type="entry name" value="JMJC"/>
    <property type="match status" value="1"/>
</dbReference>
<dbReference type="PROSITE" id="PS51058">
    <property type="entry name" value="ZF_CXXC"/>
    <property type="match status" value="1"/>
</dbReference>
<dbReference type="PROSITE" id="PS01359">
    <property type="entry name" value="ZF_PHD_1"/>
    <property type="match status" value="1"/>
</dbReference>
<dbReference type="PROSITE" id="PS50016">
    <property type="entry name" value="ZF_PHD_2"/>
    <property type="match status" value="1"/>
</dbReference>
<protein>
    <recommendedName>
        <fullName>Lysine-specific demethylase 2A</fullName>
        <ecNumber evidence="2">1.14.11.27</ecNumber>
    </recommendedName>
    <alternativeName>
        <fullName>F-box and leucine-rich repeat protein 11</fullName>
    </alternativeName>
    <alternativeName>
        <fullName>F-box/LRR-repeat protein 11</fullName>
    </alternativeName>
    <alternativeName>
        <fullName>JmjC domain-containing histone demethylation protein 1A</fullName>
    </alternativeName>
    <alternativeName>
        <fullName>[Histone-H3]-lysine-36 demethylase 1A</fullName>
    </alternativeName>
</protein>
<name>KDM2A_MOUSE</name>
<comment type="function">
    <text evidence="2 7">Histone demethylase that specifically demethylates 'Lys-36' of histone H3, thereby playing a central role in histone code (PubMed:32584788). Preferentially demethylates dimethylated H3 'Lys-36' residue while it has weak or no activity for mono- and tri-methylated H3 'Lys-36'. May also recognize and bind to some phosphorylated proteins and promote their ubiquitination and degradation. Required to maintain the heterochromatic state. Associates with centromeres and represses transcription of small non-coding RNAs that are encoded by the clusters of satellite repeats at the centromere. Required to sustain centromeric integrity and genomic stability, particularly during mitosis (By similarity). Regulates circadian gene expression by repressing the transcriptional activator activity of CLOCK-BMAL1 heterodimer and RORA in a catalytically-independent manner (By similarity).</text>
</comment>
<comment type="catalytic activity">
    <reaction evidence="2">
        <text>N(6),N(6)-dimethyl-L-lysyl(36)-[histone H3] + 2 2-oxoglutarate + 2 O2 = L-lysyl(36)-[histone H3] + 2 formaldehyde + 2 succinate + 2 CO2</text>
        <dbReference type="Rhea" id="RHEA:42032"/>
        <dbReference type="Rhea" id="RHEA-COMP:9785"/>
        <dbReference type="Rhea" id="RHEA-COMP:9787"/>
        <dbReference type="ChEBI" id="CHEBI:15379"/>
        <dbReference type="ChEBI" id="CHEBI:16526"/>
        <dbReference type="ChEBI" id="CHEBI:16810"/>
        <dbReference type="ChEBI" id="CHEBI:16842"/>
        <dbReference type="ChEBI" id="CHEBI:29969"/>
        <dbReference type="ChEBI" id="CHEBI:30031"/>
        <dbReference type="ChEBI" id="CHEBI:61976"/>
        <dbReference type="EC" id="1.14.11.27"/>
    </reaction>
</comment>
<comment type="cofactor">
    <cofactor evidence="2">
        <name>Fe(2+)</name>
        <dbReference type="ChEBI" id="CHEBI:29033"/>
    </cofactor>
    <text evidence="2">Binds 1 Fe(2+) ion per subunit.</text>
</comment>
<comment type="subunit">
    <text evidence="2">Part of a SCF (SKP1-cullin-F-box) protein ligase complex. Interacts with CBX5/HP1A; the interaction promotes CBX5 localization to chromatin (By similarity). The SKP1-KDM2A complex interacts with UBB (By similarity).</text>
</comment>
<comment type="subcellular location">
    <subcellularLocation>
        <location evidence="2">Nucleus</location>
        <location evidence="2">Nucleoplasm</location>
    </subcellularLocation>
    <subcellularLocation>
        <location evidence="7">Chromosome</location>
    </subcellularLocation>
    <text evidence="2">Punctate expression throughout the nucleoplasm and enriched in the perinucleolar region. Specifically nucleates at CpG islands where it's presence results in chromatin depleted in H3K36me2 (By similarity).</text>
</comment>
<comment type="alternative products">
    <event type="alternative splicing"/>
    <isoform>
        <id>P59997-1</id>
        <name>1</name>
        <sequence type="displayed"/>
    </isoform>
    <isoform>
        <id>P59997-2</id>
        <name>2</name>
        <sequence type="described" ref="VSP_017473 VSP_017474"/>
    </isoform>
    <isoform>
        <id>P59997-3</id>
        <name>3</name>
        <sequence type="described" ref="VSP_017471 VSP_017472"/>
    </isoform>
</comment>
<comment type="domain">
    <text evidence="2">The JmjC domain mediates demethylation activity and is required for satellite silencing.</text>
</comment>
<comment type="domain">
    <text evidence="2">The CXXC zinc finger preferentially recognizes nonmethylated CpG DNA, and binding is blocked when the CpG DNA is methylated (By similarity). It is essential for its ability to repress the transcriptional activator activity of CLOCK-BMAL1 heterodimer (By similarity).</text>
</comment>
<comment type="domain">
    <text evidence="2">The F-box domain mediates interaction with UBB.</text>
</comment>
<comment type="PTM">
    <text evidence="7">Mono-ADP-ribosylated at Arg-1019 in response to DNA damage, leading to displacement from chromatin, resulting in increased dimethylation of histone H3 at 'Lys-36'.</text>
</comment>
<comment type="similarity">
    <text evidence="9">Belongs to the JHDM1 histone demethylase family.</text>
</comment>
<comment type="sequence caution" evidence="9">
    <conflict type="frameshift">
        <sequence resource="EMBL" id="BC076576"/>
    </conflict>
</comment>
<evidence type="ECO:0000250" key="1"/>
<evidence type="ECO:0000250" key="2">
    <source>
        <dbReference type="UniProtKB" id="Q9Y2K7"/>
    </source>
</evidence>
<evidence type="ECO:0000255" key="3">
    <source>
        <dbReference type="PROSITE-ProRule" id="PRU00146"/>
    </source>
</evidence>
<evidence type="ECO:0000255" key="4">
    <source>
        <dbReference type="PROSITE-ProRule" id="PRU00509"/>
    </source>
</evidence>
<evidence type="ECO:0000255" key="5">
    <source>
        <dbReference type="PROSITE-ProRule" id="PRU00538"/>
    </source>
</evidence>
<evidence type="ECO:0000256" key="6">
    <source>
        <dbReference type="SAM" id="MobiDB-lite"/>
    </source>
</evidence>
<evidence type="ECO:0000269" key="7">
    <source>
    </source>
</evidence>
<evidence type="ECO:0000303" key="8">
    <source>
    </source>
</evidence>
<evidence type="ECO:0000305" key="9"/>
<evidence type="ECO:0007744" key="10">
    <source>
    </source>
</evidence>
<evidence type="ECO:0007744" key="11">
    <source>
    </source>
</evidence>
<evidence type="ECO:0007744" key="12">
    <source>
    </source>
</evidence>
<evidence type="ECO:0007829" key="13">
    <source>
        <dbReference type="PDB" id="4QXB"/>
    </source>
</evidence>
<evidence type="ECO:0007829" key="14">
    <source>
        <dbReference type="PDB" id="7UVA"/>
    </source>
</evidence>
<proteinExistence type="evidence at protein level"/>